<sequence>MTNIRKSHPLMKIVNNAFIDLPAPPNISSWWNFGSLLGVCLILQILTGLFLAMHYTPDTTTAFSSVTHICRDVNYGWIIRYMHANGASMFFICLYMHVGRGLYYGSYTFLETWNIGVILLLTVMATAFMGYVLPWGQMSFWGATVITNLLSAIPYIGTNLVEWIWGGFSVDKATLTRFFAFHFILPFIIMAIAMVHLLFLHETGSNNPTGISSDVDKIPFHPYYTIKDILGALLLILALMLLVLFAPDLLGDPDNYTPANPLNTPPHIKPEWYFLFAYAILRSIPNKLGGVLALAFSILILALIPLLHTSKQRSMMFRPLSQCLFWILMADLLTLTWIGGQPVEHPYITIGQLASIMYFLLILVLMPTAGTVENKLLKW</sequence>
<organism>
    <name type="scientific">Bos javanicus</name>
    <name type="common">Wild banteng</name>
    <dbReference type="NCBI Taxonomy" id="9906"/>
    <lineage>
        <taxon>Eukaryota</taxon>
        <taxon>Metazoa</taxon>
        <taxon>Chordata</taxon>
        <taxon>Craniata</taxon>
        <taxon>Vertebrata</taxon>
        <taxon>Euteleostomi</taxon>
        <taxon>Mammalia</taxon>
        <taxon>Eutheria</taxon>
        <taxon>Laurasiatheria</taxon>
        <taxon>Artiodactyla</taxon>
        <taxon>Ruminantia</taxon>
        <taxon>Pecora</taxon>
        <taxon>Bovidae</taxon>
        <taxon>Bovinae</taxon>
        <taxon>Bos</taxon>
    </lineage>
</organism>
<dbReference type="EMBL" id="D82889">
    <property type="protein sequence ID" value="BAA11625.1"/>
    <property type="molecule type" value="Genomic_DNA"/>
</dbReference>
<dbReference type="EMBL" id="AY689188">
    <property type="protein sequence ID" value="AAV51238.1"/>
    <property type="molecule type" value="Genomic_DNA"/>
</dbReference>
<dbReference type="SMR" id="P92583"/>
<dbReference type="GO" id="GO:0005743">
    <property type="term" value="C:mitochondrial inner membrane"/>
    <property type="evidence" value="ECO:0007669"/>
    <property type="project" value="UniProtKB-SubCell"/>
</dbReference>
<dbReference type="GO" id="GO:0045275">
    <property type="term" value="C:respiratory chain complex III"/>
    <property type="evidence" value="ECO:0007669"/>
    <property type="project" value="InterPro"/>
</dbReference>
<dbReference type="GO" id="GO:0046872">
    <property type="term" value="F:metal ion binding"/>
    <property type="evidence" value="ECO:0007669"/>
    <property type="project" value="UniProtKB-KW"/>
</dbReference>
<dbReference type="GO" id="GO:0008121">
    <property type="term" value="F:ubiquinol-cytochrome-c reductase activity"/>
    <property type="evidence" value="ECO:0007669"/>
    <property type="project" value="InterPro"/>
</dbReference>
<dbReference type="GO" id="GO:0006122">
    <property type="term" value="P:mitochondrial electron transport, ubiquinol to cytochrome c"/>
    <property type="evidence" value="ECO:0007669"/>
    <property type="project" value="TreeGrafter"/>
</dbReference>
<dbReference type="CDD" id="cd00290">
    <property type="entry name" value="cytochrome_b_C"/>
    <property type="match status" value="1"/>
</dbReference>
<dbReference type="CDD" id="cd00284">
    <property type="entry name" value="Cytochrome_b_N"/>
    <property type="match status" value="1"/>
</dbReference>
<dbReference type="FunFam" id="1.20.810.10:FF:000002">
    <property type="entry name" value="Cytochrome b"/>
    <property type="match status" value="1"/>
</dbReference>
<dbReference type="Gene3D" id="1.20.810.10">
    <property type="entry name" value="Cytochrome Bc1 Complex, Chain C"/>
    <property type="match status" value="1"/>
</dbReference>
<dbReference type="InterPro" id="IPR005798">
    <property type="entry name" value="Cyt_b/b6_C"/>
</dbReference>
<dbReference type="InterPro" id="IPR036150">
    <property type="entry name" value="Cyt_b/b6_C_sf"/>
</dbReference>
<dbReference type="InterPro" id="IPR005797">
    <property type="entry name" value="Cyt_b/b6_N"/>
</dbReference>
<dbReference type="InterPro" id="IPR027387">
    <property type="entry name" value="Cytb/b6-like_sf"/>
</dbReference>
<dbReference type="InterPro" id="IPR030689">
    <property type="entry name" value="Cytochrome_b"/>
</dbReference>
<dbReference type="InterPro" id="IPR048260">
    <property type="entry name" value="Cytochrome_b_C_euk/bac"/>
</dbReference>
<dbReference type="InterPro" id="IPR048259">
    <property type="entry name" value="Cytochrome_b_N_euk/bac"/>
</dbReference>
<dbReference type="InterPro" id="IPR016174">
    <property type="entry name" value="Di-haem_cyt_TM"/>
</dbReference>
<dbReference type="PANTHER" id="PTHR19271">
    <property type="entry name" value="CYTOCHROME B"/>
    <property type="match status" value="1"/>
</dbReference>
<dbReference type="PANTHER" id="PTHR19271:SF16">
    <property type="entry name" value="CYTOCHROME B"/>
    <property type="match status" value="1"/>
</dbReference>
<dbReference type="Pfam" id="PF00032">
    <property type="entry name" value="Cytochrom_B_C"/>
    <property type="match status" value="1"/>
</dbReference>
<dbReference type="Pfam" id="PF00033">
    <property type="entry name" value="Cytochrome_B"/>
    <property type="match status" value="1"/>
</dbReference>
<dbReference type="PIRSF" id="PIRSF038885">
    <property type="entry name" value="COB"/>
    <property type="match status" value="1"/>
</dbReference>
<dbReference type="SUPFAM" id="SSF81648">
    <property type="entry name" value="a domain/subunit of cytochrome bc1 complex (Ubiquinol-cytochrome c reductase)"/>
    <property type="match status" value="1"/>
</dbReference>
<dbReference type="SUPFAM" id="SSF81342">
    <property type="entry name" value="Transmembrane di-heme cytochromes"/>
    <property type="match status" value="1"/>
</dbReference>
<dbReference type="PROSITE" id="PS51003">
    <property type="entry name" value="CYTB_CTER"/>
    <property type="match status" value="1"/>
</dbReference>
<dbReference type="PROSITE" id="PS51002">
    <property type="entry name" value="CYTB_NTER"/>
    <property type="match status" value="1"/>
</dbReference>
<keyword id="KW-0249">Electron transport</keyword>
<keyword id="KW-0349">Heme</keyword>
<keyword id="KW-0408">Iron</keyword>
<keyword id="KW-0472">Membrane</keyword>
<keyword id="KW-0479">Metal-binding</keyword>
<keyword id="KW-0496">Mitochondrion</keyword>
<keyword id="KW-0999">Mitochondrion inner membrane</keyword>
<keyword id="KW-0679">Respiratory chain</keyword>
<keyword id="KW-0812">Transmembrane</keyword>
<keyword id="KW-1133">Transmembrane helix</keyword>
<keyword id="KW-0813">Transport</keyword>
<keyword id="KW-0830">Ubiquinone</keyword>
<evidence type="ECO:0000250" key="1"/>
<evidence type="ECO:0000250" key="2">
    <source>
        <dbReference type="UniProtKB" id="P00157"/>
    </source>
</evidence>
<evidence type="ECO:0000255" key="3">
    <source>
        <dbReference type="PROSITE-ProRule" id="PRU00967"/>
    </source>
</evidence>
<evidence type="ECO:0000255" key="4">
    <source>
        <dbReference type="PROSITE-ProRule" id="PRU00968"/>
    </source>
</evidence>
<gene>
    <name type="primary">MT-CYB</name>
    <name type="synonym">COB</name>
    <name type="synonym">CYTB</name>
    <name type="synonym">MTCYB</name>
</gene>
<proteinExistence type="inferred from homology"/>
<name>CYB_BOSJA</name>
<protein>
    <recommendedName>
        <fullName>Cytochrome b</fullName>
    </recommendedName>
    <alternativeName>
        <fullName>Complex III subunit 3</fullName>
    </alternativeName>
    <alternativeName>
        <fullName>Complex III subunit III</fullName>
    </alternativeName>
    <alternativeName>
        <fullName>Cytochrome b-c1 complex subunit 3</fullName>
    </alternativeName>
    <alternativeName>
        <fullName>Ubiquinol-cytochrome-c reductase complex cytochrome b subunit</fullName>
    </alternativeName>
</protein>
<accession>P92583</accession>
<comment type="function">
    <text evidence="2">Component of the ubiquinol-cytochrome c reductase complex (complex III or cytochrome b-c1 complex) that is part of the mitochondrial respiratory chain. The b-c1 complex mediates electron transfer from ubiquinol to cytochrome c. Contributes to the generation of a proton gradient across the mitochondrial membrane that is then used for ATP synthesis.</text>
</comment>
<comment type="cofactor">
    <cofactor evidence="2">
        <name>heme b</name>
        <dbReference type="ChEBI" id="CHEBI:60344"/>
    </cofactor>
    <text evidence="2">Binds 2 heme b groups non-covalently.</text>
</comment>
<comment type="subunit">
    <text evidence="2">The cytochrome bc1 complex contains 11 subunits: 3 respiratory subunits (MT-CYB, CYC1 and UQCRFS1), 2 core proteins (UQCRC1 and UQCRC2) and 6 low-molecular weight proteins (UQCRH/QCR6, UQCRB/QCR7, UQCRQ/QCR8, UQCR10/QCR9, UQCR11/QCR10 and a cleavage product of UQCRFS1). This cytochrome bc1 complex then forms a dimer.</text>
</comment>
<comment type="subcellular location">
    <subcellularLocation>
        <location evidence="2">Mitochondrion inner membrane</location>
        <topology evidence="2">Multi-pass membrane protein</topology>
    </subcellularLocation>
</comment>
<comment type="miscellaneous">
    <text evidence="1">Heme 1 (or BL or b562) is low-potential and absorbs at about 562 nm, and heme 2 (or BH or b566) is high-potential and absorbs at about 566 nm.</text>
</comment>
<comment type="similarity">
    <text evidence="3 4">Belongs to the cytochrome b family.</text>
</comment>
<comment type="caution">
    <text evidence="2">The full-length protein contains only eight transmembrane helices, not nine as predicted by bioinformatics tools.</text>
</comment>
<geneLocation type="mitochondrion"/>
<reference key="1">
    <citation type="journal article" date="1996" name="Biochem. Genet.">
        <title>Phylogenetic relationship among all living species of the genus Bubalus based on DNA sequences of the cytochrome b gene.</title>
        <authorList>
            <person name="Tanaka K."/>
            <person name="Solis C.D."/>
            <person name="Masangkay J.S."/>
            <person name="Maeda K."/>
            <person name="Kawamoto Y."/>
            <person name="Namikawa T."/>
        </authorList>
    </citation>
    <scope>NUCLEOTIDE SEQUENCE [GENOMIC DNA]</scope>
    <source>
        <tissue>Blood</tissue>
    </source>
</reference>
<reference key="2">
    <citation type="journal article" date="2004" name="Mol. Phylogenet. Evol.">
        <title>Molecular phylogeny of the tribe Bovini (Bovidae, Bovinae) and the taxonomic status of the Kouprey, Bos sauveli Urbain 1937.</title>
        <authorList>
            <person name="Hassanin A."/>
            <person name="Ropiquet A."/>
        </authorList>
    </citation>
    <scope>NUCLEOTIDE SEQUENCE [GENOMIC DNA]</scope>
</reference>
<feature type="chain" id="PRO_0000060680" description="Cytochrome b">
    <location>
        <begin position="1"/>
        <end position="379"/>
    </location>
</feature>
<feature type="transmembrane region" description="Helical" evidence="2">
    <location>
        <begin position="33"/>
        <end position="53"/>
    </location>
</feature>
<feature type="transmembrane region" description="Helical" evidence="2">
    <location>
        <begin position="77"/>
        <end position="98"/>
    </location>
</feature>
<feature type="transmembrane region" description="Helical" evidence="2">
    <location>
        <begin position="113"/>
        <end position="133"/>
    </location>
</feature>
<feature type="transmembrane region" description="Helical" evidence="2">
    <location>
        <begin position="178"/>
        <end position="198"/>
    </location>
</feature>
<feature type="transmembrane region" description="Helical" evidence="2">
    <location>
        <begin position="226"/>
        <end position="246"/>
    </location>
</feature>
<feature type="transmembrane region" description="Helical" evidence="2">
    <location>
        <begin position="288"/>
        <end position="308"/>
    </location>
</feature>
<feature type="transmembrane region" description="Helical" evidence="2">
    <location>
        <begin position="320"/>
        <end position="340"/>
    </location>
</feature>
<feature type="transmembrane region" description="Helical" evidence="2">
    <location>
        <begin position="347"/>
        <end position="367"/>
    </location>
</feature>
<feature type="binding site" description="axial binding residue" evidence="2">
    <location>
        <position position="83"/>
    </location>
    <ligand>
        <name>heme b</name>
        <dbReference type="ChEBI" id="CHEBI:60344"/>
        <label>b562</label>
    </ligand>
    <ligandPart>
        <name>Fe</name>
        <dbReference type="ChEBI" id="CHEBI:18248"/>
    </ligandPart>
</feature>
<feature type="binding site" description="axial binding residue" evidence="2">
    <location>
        <position position="97"/>
    </location>
    <ligand>
        <name>heme b</name>
        <dbReference type="ChEBI" id="CHEBI:60344"/>
        <label>b566</label>
    </ligand>
    <ligandPart>
        <name>Fe</name>
        <dbReference type="ChEBI" id="CHEBI:18248"/>
    </ligandPart>
</feature>
<feature type="binding site" description="axial binding residue" evidence="2">
    <location>
        <position position="182"/>
    </location>
    <ligand>
        <name>heme b</name>
        <dbReference type="ChEBI" id="CHEBI:60344"/>
        <label>b562</label>
    </ligand>
    <ligandPart>
        <name>Fe</name>
        <dbReference type="ChEBI" id="CHEBI:18248"/>
    </ligandPart>
</feature>
<feature type="binding site" description="axial binding residue" evidence="2">
    <location>
        <position position="196"/>
    </location>
    <ligand>
        <name>heme b</name>
        <dbReference type="ChEBI" id="CHEBI:60344"/>
        <label>b566</label>
    </ligand>
    <ligandPart>
        <name>Fe</name>
        <dbReference type="ChEBI" id="CHEBI:18248"/>
    </ligandPart>
</feature>
<feature type="binding site" evidence="2">
    <location>
        <position position="201"/>
    </location>
    <ligand>
        <name>a ubiquinone</name>
        <dbReference type="ChEBI" id="CHEBI:16389"/>
    </ligand>
</feature>